<feature type="chain" id="PRO_0000228497" description="Ribonuclease 3">
    <location>
        <begin position="1"/>
        <end position="290"/>
    </location>
</feature>
<feature type="domain" description="RNase III" evidence="1">
    <location>
        <begin position="20"/>
        <end position="145"/>
    </location>
</feature>
<feature type="domain" description="DRBM" evidence="1">
    <location>
        <begin position="173"/>
        <end position="242"/>
    </location>
</feature>
<feature type="region of interest" description="Disordered" evidence="2">
    <location>
        <begin position="254"/>
        <end position="290"/>
    </location>
</feature>
<feature type="compositionally biased region" description="Polar residues" evidence="2">
    <location>
        <begin position="267"/>
        <end position="279"/>
    </location>
</feature>
<feature type="active site" evidence="1">
    <location>
        <position position="66"/>
    </location>
</feature>
<feature type="active site" evidence="1">
    <location>
        <position position="134"/>
    </location>
</feature>
<feature type="binding site" evidence="1">
    <location>
        <position position="62"/>
    </location>
    <ligand>
        <name>Mg(2+)</name>
        <dbReference type="ChEBI" id="CHEBI:18420"/>
    </ligand>
</feature>
<feature type="binding site" evidence="1">
    <location>
        <position position="131"/>
    </location>
    <ligand>
        <name>Mg(2+)</name>
        <dbReference type="ChEBI" id="CHEBI:18420"/>
    </ligand>
</feature>
<feature type="binding site" evidence="1">
    <location>
        <position position="134"/>
    </location>
    <ligand>
        <name>Mg(2+)</name>
        <dbReference type="ChEBI" id="CHEBI:18420"/>
    </ligand>
</feature>
<evidence type="ECO:0000255" key="1">
    <source>
        <dbReference type="HAMAP-Rule" id="MF_00104"/>
    </source>
</evidence>
<evidence type="ECO:0000256" key="2">
    <source>
        <dbReference type="SAM" id="MobiDB-lite"/>
    </source>
</evidence>
<sequence>MLRNKIDKIRLLFRKDRESYSCFYRILGFYPRNIRLYEQALLHKSTAVRSEKGRPLNNERLEFLGDAILDAIVGDIVYQHFEGKREGFLTNTRSKIVQRETLNKLAVEIGLDKLIKYSTRSSSHNSYMYGNAFEAFIGAIYLDRGYECCKQFMERRIIEPYIDLDKLSRKEVNFKSKLIEWSQKNKMEVSFELIEQSLDKENNPVFQTEVRIEGILGGSGTGYSKKESQQNAAQMTLKKIKGDPEFMASVQEAKTQNNVPAEDTTPESETSLTAENQQIDEIISTEEISV</sequence>
<proteinExistence type="inferred from homology"/>
<name>RNC_BACFN</name>
<reference key="1">
    <citation type="journal article" date="2005" name="Science">
        <title>Extensive DNA inversions in the B. fragilis genome control variable gene expression.</title>
        <authorList>
            <person name="Cerdeno-Tarraga A.-M."/>
            <person name="Patrick S."/>
            <person name="Crossman L.C."/>
            <person name="Blakely G."/>
            <person name="Abratt V."/>
            <person name="Lennard N."/>
            <person name="Poxton I."/>
            <person name="Duerden B."/>
            <person name="Harris B."/>
            <person name="Quail M.A."/>
            <person name="Barron A."/>
            <person name="Clark L."/>
            <person name="Corton C."/>
            <person name="Doggett J."/>
            <person name="Holden M.T.G."/>
            <person name="Larke N."/>
            <person name="Line A."/>
            <person name="Lord A."/>
            <person name="Norbertczak H."/>
            <person name="Ormond D."/>
            <person name="Price C."/>
            <person name="Rabbinowitsch E."/>
            <person name="Woodward J."/>
            <person name="Barrell B.G."/>
            <person name="Parkhill J."/>
        </authorList>
    </citation>
    <scope>NUCLEOTIDE SEQUENCE [LARGE SCALE GENOMIC DNA]</scope>
    <source>
        <strain>ATCC 25285 / DSM 2151 / CCUG 4856 / JCM 11019 / LMG 10263 / NCTC 9343 / Onslow / VPI 2553 / EN-2</strain>
    </source>
</reference>
<accession>Q5LIS2</accession>
<organism>
    <name type="scientific">Bacteroides fragilis (strain ATCC 25285 / DSM 2151 / CCUG 4856 / JCM 11019 / LMG 10263 / NCTC 9343 / Onslow / VPI 2553 / EN-2)</name>
    <dbReference type="NCBI Taxonomy" id="272559"/>
    <lineage>
        <taxon>Bacteria</taxon>
        <taxon>Pseudomonadati</taxon>
        <taxon>Bacteroidota</taxon>
        <taxon>Bacteroidia</taxon>
        <taxon>Bacteroidales</taxon>
        <taxon>Bacteroidaceae</taxon>
        <taxon>Bacteroides</taxon>
    </lineage>
</organism>
<dbReference type="EC" id="3.1.26.3" evidence="1"/>
<dbReference type="EMBL" id="CR626927">
    <property type="protein sequence ID" value="CAH05954.1"/>
    <property type="molecule type" value="Genomic_DNA"/>
</dbReference>
<dbReference type="RefSeq" id="WP_005796814.1">
    <property type="nucleotide sequence ID" value="NZ_UFTH01000001.1"/>
</dbReference>
<dbReference type="SMR" id="Q5LIS2"/>
<dbReference type="PaxDb" id="272559-BF9343_0175"/>
<dbReference type="GeneID" id="60368656"/>
<dbReference type="KEGG" id="bfs:BF9343_0175"/>
<dbReference type="eggNOG" id="COG0571">
    <property type="taxonomic scope" value="Bacteria"/>
</dbReference>
<dbReference type="HOGENOM" id="CLU_000907_1_0_10"/>
<dbReference type="Proteomes" id="UP000006731">
    <property type="component" value="Chromosome"/>
</dbReference>
<dbReference type="GO" id="GO:0005737">
    <property type="term" value="C:cytoplasm"/>
    <property type="evidence" value="ECO:0007669"/>
    <property type="project" value="UniProtKB-SubCell"/>
</dbReference>
<dbReference type="GO" id="GO:0003725">
    <property type="term" value="F:double-stranded RNA binding"/>
    <property type="evidence" value="ECO:0007669"/>
    <property type="project" value="TreeGrafter"/>
</dbReference>
<dbReference type="GO" id="GO:0046872">
    <property type="term" value="F:metal ion binding"/>
    <property type="evidence" value="ECO:0007669"/>
    <property type="project" value="UniProtKB-KW"/>
</dbReference>
<dbReference type="GO" id="GO:0004525">
    <property type="term" value="F:ribonuclease III activity"/>
    <property type="evidence" value="ECO:0007669"/>
    <property type="project" value="UniProtKB-UniRule"/>
</dbReference>
<dbReference type="GO" id="GO:0019843">
    <property type="term" value="F:rRNA binding"/>
    <property type="evidence" value="ECO:0007669"/>
    <property type="project" value="UniProtKB-KW"/>
</dbReference>
<dbReference type="GO" id="GO:0006397">
    <property type="term" value="P:mRNA processing"/>
    <property type="evidence" value="ECO:0007669"/>
    <property type="project" value="UniProtKB-UniRule"/>
</dbReference>
<dbReference type="GO" id="GO:0010468">
    <property type="term" value="P:regulation of gene expression"/>
    <property type="evidence" value="ECO:0007669"/>
    <property type="project" value="TreeGrafter"/>
</dbReference>
<dbReference type="GO" id="GO:0006364">
    <property type="term" value="P:rRNA processing"/>
    <property type="evidence" value="ECO:0007669"/>
    <property type="project" value="UniProtKB-UniRule"/>
</dbReference>
<dbReference type="GO" id="GO:0008033">
    <property type="term" value="P:tRNA processing"/>
    <property type="evidence" value="ECO:0007669"/>
    <property type="project" value="UniProtKB-KW"/>
</dbReference>
<dbReference type="CDD" id="cd10845">
    <property type="entry name" value="DSRM_RNAse_III_family"/>
    <property type="match status" value="1"/>
</dbReference>
<dbReference type="CDD" id="cd00593">
    <property type="entry name" value="RIBOc"/>
    <property type="match status" value="1"/>
</dbReference>
<dbReference type="FunFam" id="1.10.1520.10:FF:000012">
    <property type="entry name" value="Ribonuclease 3"/>
    <property type="match status" value="1"/>
</dbReference>
<dbReference type="Gene3D" id="3.30.160.20">
    <property type="match status" value="1"/>
</dbReference>
<dbReference type="Gene3D" id="1.10.1520.10">
    <property type="entry name" value="Ribonuclease III domain"/>
    <property type="match status" value="1"/>
</dbReference>
<dbReference type="HAMAP" id="MF_00104">
    <property type="entry name" value="RNase_III"/>
    <property type="match status" value="1"/>
</dbReference>
<dbReference type="InterPro" id="IPR014720">
    <property type="entry name" value="dsRBD_dom"/>
</dbReference>
<dbReference type="InterPro" id="IPR011907">
    <property type="entry name" value="RNase_III"/>
</dbReference>
<dbReference type="InterPro" id="IPR000999">
    <property type="entry name" value="RNase_III_dom"/>
</dbReference>
<dbReference type="InterPro" id="IPR036389">
    <property type="entry name" value="RNase_III_sf"/>
</dbReference>
<dbReference type="NCBIfam" id="TIGR02191">
    <property type="entry name" value="RNaseIII"/>
    <property type="match status" value="1"/>
</dbReference>
<dbReference type="PANTHER" id="PTHR11207:SF0">
    <property type="entry name" value="RIBONUCLEASE 3"/>
    <property type="match status" value="1"/>
</dbReference>
<dbReference type="PANTHER" id="PTHR11207">
    <property type="entry name" value="RIBONUCLEASE III"/>
    <property type="match status" value="1"/>
</dbReference>
<dbReference type="Pfam" id="PF00035">
    <property type="entry name" value="dsrm"/>
    <property type="match status" value="1"/>
</dbReference>
<dbReference type="Pfam" id="PF14622">
    <property type="entry name" value="Ribonucleas_3_3"/>
    <property type="match status" value="1"/>
</dbReference>
<dbReference type="SMART" id="SM00358">
    <property type="entry name" value="DSRM"/>
    <property type="match status" value="1"/>
</dbReference>
<dbReference type="SMART" id="SM00535">
    <property type="entry name" value="RIBOc"/>
    <property type="match status" value="1"/>
</dbReference>
<dbReference type="SUPFAM" id="SSF54768">
    <property type="entry name" value="dsRNA-binding domain-like"/>
    <property type="match status" value="1"/>
</dbReference>
<dbReference type="SUPFAM" id="SSF69065">
    <property type="entry name" value="RNase III domain-like"/>
    <property type="match status" value="1"/>
</dbReference>
<dbReference type="PROSITE" id="PS50137">
    <property type="entry name" value="DS_RBD"/>
    <property type="match status" value="1"/>
</dbReference>
<dbReference type="PROSITE" id="PS00517">
    <property type="entry name" value="RNASE_3_1"/>
    <property type="match status" value="1"/>
</dbReference>
<dbReference type="PROSITE" id="PS50142">
    <property type="entry name" value="RNASE_3_2"/>
    <property type="match status" value="1"/>
</dbReference>
<comment type="function">
    <text evidence="1">Digests double-stranded RNA. Involved in the processing of primary rRNA transcript to yield the immediate precursors to the large and small rRNAs (23S and 16S). Processes some mRNAs, and tRNAs when they are encoded in the rRNA operon. Processes pre-crRNA and tracrRNA of type II CRISPR loci if present in the organism.</text>
</comment>
<comment type="catalytic activity">
    <reaction evidence="1">
        <text>Endonucleolytic cleavage to 5'-phosphomonoester.</text>
        <dbReference type="EC" id="3.1.26.3"/>
    </reaction>
</comment>
<comment type="cofactor">
    <cofactor evidence="1">
        <name>Mg(2+)</name>
        <dbReference type="ChEBI" id="CHEBI:18420"/>
    </cofactor>
</comment>
<comment type="subunit">
    <text evidence="1">Homodimer.</text>
</comment>
<comment type="subcellular location">
    <subcellularLocation>
        <location evidence="1">Cytoplasm</location>
    </subcellularLocation>
</comment>
<comment type="similarity">
    <text evidence="1">Belongs to the ribonuclease III family.</text>
</comment>
<keyword id="KW-0963">Cytoplasm</keyword>
<keyword id="KW-0255">Endonuclease</keyword>
<keyword id="KW-0378">Hydrolase</keyword>
<keyword id="KW-0460">Magnesium</keyword>
<keyword id="KW-0479">Metal-binding</keyword>
<keyword id="KW-0507">mRNA processing</keyword>
<keyword id="KW-0540">Nuclease</keyword>
<keyword id="KW-0694">RNA-binding</keyword>
<keyword id="KW-0698">rRNA processing</keyword>
<keyword id="KW-0699">rRNA-binding</keyword>
<keyword id="KW-0819">tRNA processing</keyword>
<protein>
    <recommendedName>
        <fullName evidence="1">Ribonuclease 3</fullName>
        <ecNumber evidence="1">3.1.26.3</ecNumber>
    </recommendedName>
    <alternativeName>
        <fullName evidence="1">Ribonuclease III</fullName>
        <shortName evidence="1">RNase III</shortName>
    </alternativeName>
</protein>
<gene>
    <name evidence="1" type="primary">rnc</name>
    <name type="ordered locus">BF0177</name>
</gene>